<comment type="catalytic activity">
    <reaction evidence="1">
        <text>N-(5-phospho-beta-D-ribosyl)anthranilate = 1-(2-carboxyphenylamino)-1-deoxy-D-ribulose 5-phosphate</text>
        <dbReference type="Rhea" id="RHEA:21540"/>
        <dbReference type="ChEBI" id="CHEBI:18277"/>
        <dbReference type="ChEBI" id="CHEBI:58613"/>
        <dbReference type="EC" id="5.3.1.24"/>
    </reaction>
</comment>
<comment type="pathway">
    <text evidence="1">Amino-acid biosynthesis; L-tryptophan biosynthesis; L-tryptophan from chorismate: step 3/5.</text>
</comment>
<comment type="similarity">
    <text evidence="1">Belongs to the TrpF family.</text>
</comment>
<accession>Q74AH7</accession>
<gene>
    <name evidence="1" type="primary">trpF</name>
    <name type="ordered locus">GSU2378</name>
</gene>
<sequence>MVRVKICGITSLEDALVAVEAGADALGFVFHDESPRHVTPEQAAGIIAGLPPFIQTVGLFVNRPPAFVNDTATRCRLDLVQLHGDEPPEFCDAVERRVIKAFRVKDISSLDPIRHYRVAAHLLDAYSPKAYGGTGLTFNWDIAAAAKAFGPLILAGGLTPDNVREAVETVKPYAVDVSGGVESAPGRKDAARVREFIRRAKGW</sequence>
<protein>
    <recommendedName>
        <fullName evidence="1">N-(5'-phosphoribosyl)anthranilate isomerase</fullName>
        <shortName evidence="1">PRAI</shortName>
        <ecNumber evidence="1">5.3.1.24</ecNumber>
    </recommendedName>
</protein>
<keyword id="KW-0028">Amino-acid biosynthesis</keyword>
<keyword id="KW-0057">Aromatic amino acid biosynthesis</keyword>
<keyword id="KW-0413">Isomerase</keyword>
<keyword id="KW-1185">Reference proteome</keyword>
<keyword id="KW-0822">Tryptophan biosynthesis</keyword>
<evidence type="ECO:0000255" key="1">
    <source>
        <dbReference type="HAMAP-Rule" id="MF_00135"/>
    </source>
</evidence>
<reference key="1">
    <citation type="journal article" date="2003" name="Science">
        <title>Genome of Geobacter sulfurreducens: metal reduction in subsurface environments.</title>
        <authorList>
            <person name="Methe B.A."/>
            <person name="Nelson K.E."/>
            <person name="Eisen J.A."/>
            <person name="Paulsen I.T."/>
            <person name="Nelson W.C."/>
            <person name="Heidelberg J.F."/>
            <person name="Wu D."/>
            <person name="Wu M."/>
            <person name="Ward N.L."/>
            <person name="Beanan M.J."/>
            <person name="Dodson R.J."/>
            <person name="Madupu R."/>
            <person name="Brinkac L.M."/>
            <person name="Daugherty S.C."/>
            <person name="DeBoy R.T."/>
            <person name="Durkin A.S."/>
            <person name="Gwinn M.L."/>
            <person name="Kolonay J.F."/>
            <person name="Sullivan S.A."/>
            <person name="Haft D.H."/>
            <person name="Selengut J."/>
            <person name="Davidsen T.M."/>
            <person name="Zafar N."/>
            <person name="White O."/>
            <person name="Tran B."/>
            <person name="Romero C."/>
            <person name="Forberger H.A."/>
            <person name="Weidman J.F."/>
            <person name="Khouri H.M."/>
            <person name="Feldblyum T.V."/>
            <person name="Utterback T.R."/>
            <person name="Van Aken S.E."/>
            <person name="Lovley D.R."/>
            <person name="Fraser C.M."/>
        </authorList>
    </citation>
    <scope>NUCLEOTIDE SEQUENCE [LARGE SCALE GENOMIC DNA]</scope>
    <source>
        <strain>ATCC 51573 / DSM 12127 / PCA</strain>
    </source>
</reference>
<proteinExistence type="inferred from homology"/>
<dbReference type="EC" id="5.3.1.24" evidence="1"/>
<dbReference type="EMBL" id="AE017180">
    <property type="protein sequence ID" value="AAR35751.1"/>
    <property type="molecule type" value="Genomic_DNA"/>
</dbReference>
<dbReference type="RefSeq" id="NP_953424.1">
    <property type="nucleotide sequence ID" value="NC_002939.5"/>
</dbReference>
<dbReference type="RefSeq" id="WP_010943014.1">
    <property type="nucleotide sequence ID" value="NC_002939.5"/>
</dbReference>
<dbReference type="SMR" id="Q74AH7"/>
<dbReference type="STRING" id="243231.GSU2378"/>
<dbReference type="EnsemblBacteria" id="AAR35751">
    <property type="protein sequence ID" value="AAR35751"/>
    <property type="gene ID" value="GSU2378"/>
</dbReference>
<dbReference type="KEGG" id="gsu:GSU2378"/>
<dbReference type="PATRIC" id="fig|243231.5.peg.2405"/>
<dbReference type="eggNOG" id="COG0135">
    <property type="taxonomic scope" value="Bacteria"/>
</dbReference>
<dbReference type="HOGENOM" id="CLU_076364_2_0_7"/>
<dbReference type="InParanoid" id="Q74AH7"/>
<dbReference type="OrthoDB" id="9796196at2"/>
<dbReference type="UniPathway" id="UPA00035">
    <property type="reaction ID" value="UER00042"/>
</dbReference>
<dbReference type="Proteomes" id="UP000000577">
    <property type="component" value="Chromosome"/>
</dbReference>
<dbReference type="GO" id="GO:0004640">
    <property type="term" value="F:phosphoribosylanthranilate isomerase activity"/>
    <property type="evidence" value="ECO:0000318"/>
    <property type="project" value="GO_Central"/>
</dbReference>
<dbReference type="GO" id="GO:0000162">
    <property type="term" value="P:L-tryptophan biosynthetic process"/>
    <property type="evidence" value="ECO:0000318"/>
    <property type="project" value="GO_Central"/>
</dbReference>
<dbReference type="CDD" id="cd00405">
    <property type="entry name" value="PRAI"/>
    <property type="match status" value="1"/>
</dbReference>
<dbReference type="FunFam" id="3.20.20.70:FF:000075">
    <property type="entry name" value="Tryptophan biosynthesis protein TRP1"/>
    <property type="match status" value="1"/>
</dbReference>
<dbReference type="Gene3D" id="3.20.20.70">
    <property type="entry name" value="Aldolase class I"/>
    <property type="match status" value="1"/>
</dbReference>
<dbReference type="HAMAP" id="MF_00135">
    <property type="entry name" value="PRAI"/>
    <property type="match status" value="1"/>
</dbReference>
<dbReference type="InterPro" id="IPR013785">
    <property type="entry name" value="Aldolase_TIM"/>
</dbReference>
<dbReference type="InterPro" id="IPR001240">
    <property type="entry name" value="PRAI_dom"/>
</dbReference>
<dbReference type="InterPro" id="IPR011060">
    <property type="entry name" value="RibuloseP-bd_barrel"/>
</dbReference>
<dbReference type="InterPro" id="IPR044643">
    <property type="entry name" value="TrpF_fam"/>
</dbReference>
<dbReference type="NCBIfam" id="NF002298">
    <property type="entry name" value="PRK01222.1-4"/>
    <property type="match status" value="1"/>
</dbReference>
<dbReference type="PANTHER" id="PTHR42894">
    <property type="entry name" value="N-(5'-PHOSPHORIBOSYL)ANTHRANILATE ISOMERASE"/>
    <property type="match status" value="1"/>
</dbReference>
<dbReference type="PANTHER" id="PTHR42894:SF1">
    <property type="entry name" value="N-(5'-PHOSPHORIBOSYL)ANTHRANILATE ISOMERASE"/>
    <property type="match status" value="1"/>
</dbReference>
<dbReference type="Pfam" id="PF00697">
    <property type="entry name" value="PRAI"/>
    <property type="match status" value="1"/>
</dbReference>
<dbReference type="SUPFAM" id="SSF51366">
    <property type="entry name" value="Ribulose-phoshate binding barrel"/>
    <property type="match status" value="1"/>
</dbReference>
<name>TRPF_GEOSL</name>
<organism>
    <name type="scientific">Geobacter sulfurreducens (strain ATCC 51573 / DSM 12127 / PCA)</name>
    <dbReference type="NCBI Taxonomy" id="243231"/>
    <lineage>
        <taxon>Bacteria</taxon>
        <taxon>Pseudomonadati</taxon>
        <taxon>Thermodesulfobacteriota</taxon>
        <taxon>Desulfuromonadia</taxon>
        <taxon>Geobacterales</taxon>
        <taxon>Geobacteraceae</taxon>
        <taxon>Geobacter</taxon>
    </lineage>
</organism>
<feature type="chain" id="PRO_1000071440" description="N-(5'-phosphoribosyl)anthranilate isomerase">
    <location>
        <begin position="1"/>
        <end position="203"/>
    </location>
</feature>